<evidence type="ECO:0000255" key="1">
    <source>
        <dbReference type="HAMAP-Rule" id="MF_00037"/>
    </source>
</evidence>
<gene>
    <name evidence="1" type="primary">murB</name>
    <name type="ordered locus">Gura_3972</name>
</gene>
<organism>
    <name type="scientific">Geotalea uraniireducens (strain Rf4)</name>
    <name type="common">Geobacter uraniireducens</name>
    <dbReference type="NCBI Taxonomy" id="351605"/>
    <lineage>
        <taxon>Bacteria</taxon>
        <taxon>Pseudomonadati</taxon>
        <taxon>Thermodesulfobacteriota</taxon>
        <taxon>Desulfuromonadia</taxon>
        <taxon>Geobacterales</taxon>
        <taxon>Geobacteraceae</taxon>
        <taxon>Geotalea</taxon>
    </lineage>
</organism>
<reference key="1">
    <citation type="submission" date="2007-05" db="EMBL/GenBank/DDBJ databases">
        <title>Complete sequence of Geobacter uraniireducens Rf4.</title>
        <authorList>
            <consortium name="US DOE Joint Genome Institute"/>
            <person name="Copeland A."/>
            <person name="Lucas S."/>
            <person name="Lapidus A."/>
            <person name="Barry K."/>
            <person name="Detter J.C."/>
            <person name="Glavina del Rio T."/>
            <person name="Hammon N."/>
            <person name="Israni S."/>
            <person name="Dalin E."/>
            <person name="Tice H."/>
            <person name="Pitluck S."/>
            <person name="Chertkov O."/>
            <person name="Brettin T."/>
            <person name="Bruce D."/>
            <person name="Han C."/>
            <person name="Schmutz J."/>
            <person name="Larimer F."/>
            <person name="Land M."/>
            <person name="Hauser L."/>
            <person name="Kyrpides N."/>
            <person name="Mikhailova N."/>
            <person name="Shelobolina E."/>
            <person name="Aklujkar M."/>
            <person name="Lovley D."/>
            <person name="Richardson P."/>
        </authorList>
    </citation>
    <scope>NUCLEOTIDE SEQUENCE [LARGE SCALE GENOMIC DNA]</scope>
    <source>
        <strain>ATCC BAA-1134 / JCM 13001 / Rf4</strain>
    </source>
</reference>
<protein>
    <recommendedName>
        <fullName evidence="1">UDP-N-acetylenolpyruvoylglucosamine reductase</fullName>
        <ecNumber evidence="1">1.3.1.98</ecNumber>
    </recommendedName>
    <alternativeName>
        <fullName evidence="1">UDP-N-acetylmuramate dehydrogenase</fullName>
    </alternativeName>
</protein>
<name>MURB_GEOUR</name>
<comment type="function">
    <text evidence="1">Cell wall formation.</text>
</comment>
<comment type="catalytic activity">
    <reaction evidence="1">
        <text>UDP-N-acetyl-alpha-D-muramate + NADP(+) = UDP-N-acetyl-3-O-(1-carboxyvinyl)-alpha-D-glucosamine + NADPH + H(+)</text>
        <dbReference type="Rhea" id="RHEA:12248"/>
        <dbReference type="ChEBI" id="CHEBI:15378"/>
        <dbReference type="ChEBI" id="CHEBI:57783"/>
        <dbReference type="ChEBI" id="CHEBI:58349"/>
        <dbReference type="ChEBI" id="CHEBI:68483"/>
        <dbReference type="ChEBI" id="CHEBI:70757"/>
        <dbReference type="EC" id="1.3.1.98"/>
    </reaction>
</comment>
<comment type="cofactor">
    <cofactor evidence="1">
        <name>FAD</name>
        <dbReference type="ChEBI" id="CHEBI:57692"/>
    </cofactor>
</comment>
<comment type="pathway">
    <text evidence="1">Cell wall biogenesis; peptidoglycan biosynthesis.</text>
</comment>
<comment type="subcellular location">
    <subcellularLocation>
        <location evidence="1">Cytoplasm</location>
    </subcellularLocation>
</comment>
<comment type="similarity">
    <text evidence="1">Belongs to the MurB family.</text>
</comment>
<feature type="chain" id="PRO_0000332462" description="UDP-N-acetylenolpyruvoylglucosamine reductase">
    <location>
        <begin position="1"/>
        <end position="300"/>
    </location>
</feature>
<feature type="domain" description="FAD-binding PCMH-type" evidence="1">
    <location>
        <begin position="30"/>
        <end position="194"/>
    </location>
</feature>
<feature type="active site" evidence="1">
    <location>
        <position position="174"/>
    </location>
</feature>
<feature type="active site" description="Proton donor" evidence="1">
    <location>
        <position position="223"/>
    </location>
</feature>
<feature type="active site" evidence="1">
    <location>
        <position position="293"/>
    </location>
</feature>
<dbReference type="EC" id="1.3.1.98" evidence="1"/>
<dbReference type="EMBL" id="CP000698">
    <property type="protein sequence ID" value="ABQ28116.1"/>
    <property type="molecule type" value="Genomic_DNA"/>
</dbReference>
<dbReference type="RefSeq" id="WP_011940753.1">
    <property type="nucleotide sequence ID" value="NC_009483.1"/>
</dbReference>
<dbReference type="SMR" id="A5G8J8"/>
<dbReference type="STRING" id="351605.Gura_3972"/>
<dbReference type="KEGG" id="gur:Gura_3972"/>
<dbReference type="HOGENOM" id="CLU_035304_1_1_7"/>
<dbReference type="OrthoDB" id="9804753at2"/>
<dbReference type="UniPathway" id="UPA00219"/>
<dbReference type="Proteomes" id="UP000006695">
    <property type="component" value="Chromosome"/>
</dbReference>
<dbReference type="GO" id="GO:0005829">
    <property type="term" value="C:cytosol"/>
    <property type="evidence" value="ECO:0007669"/>
    <property type="project" value="TreeGrafter"/>
</dbReference>
<dbReference type="GO" id="GO:0071949">
    <property type="term" value="F:FAD binding"/>
    <property type="evidence" value="ECO:0007669"/>
    <property type="project" value="InterPro"/>
</dbReference>
<dbReference type="GO" id="GO:0008762">
    <property type="term" value="F:UDP-N-acetylmuramate dehydrogenase activity"/>
    <property type="evidence" value="ECO:0007669"/>
    <property type="project" value="UniProtKB-UniRule"/>
</dbReference>
<dbReference type="GO" id="GO:0051301">
    <property type="term" value="P:cell division"/>
    <property type="evidence" value="ECO:0007669"/>
    <property type="project" value="UniProtKB-KW"/>
</dbReference>
<dbReference type="GO" id="GO:0071555">
    <property type="term" value="P:cell wall organization"/>
    <property type="evidence" value="ECO:0007669"/>
    <property type="project" value="UniProtKB-KW"/>
</dbReference>
<dbReference type="GO" id="GO:0009252">
    <property type="term" value="P:peptidoglycan biosynthetic process"/>
    <property type="evidence" value="ECO:0007669"/>
    <property type="project" value="UniProtKB-UniRule"/>
</dbReference>
<dbReference type="GO" id="GO:0008360">
    <property type="term" value="P:regulation of cell shape"/>
    <property type="evidence" value="ECO:0007669"/>
    <property type="project" value="UniProtKB-KW"/>
</dbReference>
<dbReference type="Gene3D" id="3.30.465.10">
    <property type="match status" value="1"/>
</dbReference>
<dbReference type="Gene3D" id="3.90.78.10">
    <property type="entry name" value="UDP-N-acetylenolpyruvoylglucosamine reductase, C-terminal domain"/>
    <property type="match status" value="1"/>
</dbReference>
<dbReference type="Gene3D" id="3.30.43.10">
    <property type="entry name" value="Uridine Diphospho-n-acetylenolpyruvylglucosamine Reductase, domain 2"/>
    <property type="match status" value="1"/>
</dbReference>
<dbReference type="HAMAP" id="MF_00037">
    <property type="entry name" value="MurB"/>
    <property type="match status" value="1"/>
</dbReference>
<dbReference type="InterPro" id="IPR016166">
    <property type="entry name" value="FAD-bd_PCMH"/>
</dbReference>
<dbReference type="InterPro" id="IPR036318">
    <property type="entry name" value="FAD-bd_PCMH-like_sf"/>
</dbReference>
<dbReference type="InterPro" id="IPR016167">
    <property type="entry name" value="FAD-bd_PCMH_sub1"/>
</dbReference>
<dbReference type="InterPro" id="IPR016169">
    <property type="entry name" value="FAD-bd_PCMH_sub2"/>
</dbReference>
<dbReference type="InterPro" id="IPR003170">
    <property type="entry name" value="MurB"/>
</dbReference>
<dbReference type="InterPro" id="IPR011601">
    <property type="entry name" value="MurB_C"/>
</dbReference>
<dbReference type="InterPro" id="IPR036635">
    <property type="entry name" value="MurB_C_sf"/>
</dbReference>
<dbReference type="InterPro" id="IPR006094">
    <property type="entry name" value="Oxid_FAD_bind_N"/>
</dbReference>
<dbReference type="NCBIfam" id="TIGR00179">
    <property type="entry name" value="murB"/>
    <property type="match status" value="1"/>
</dbReference>
<dbReference type="NCBIfam" id="NF010480">
    <property type="entry name" value="PRK13905.1"/>
    <property type="match status" value="1"/>
</dbReference>
<dbReference type="PANTHER" id="PTHR21071">
    <property type="entry name" value="UDP-N-ACETYLENOLPYRUVOYLGLUCOSAMINE REDUCTASE"/>
    <property type="match status" value="1"/>
</dbReference>
<dbReference type="PANTHER" id="PTHR21071:SF4">
    <property type="entry name" value="UDP-N-ACETYLENOLPYRUVOYLGLUCOSAMINE REDUCTASE"/>
    <property type="match status" value="1"/>
</dbReference>
<dbReference type="Pfam" id="PF01565">
    <property type="entry name" value="FAD_binding_4"/>
    <property type="match status" value="1"/>
</dbReference>
<dbReference type="Pfam" id="PF02873">
    <property type="entry name" value="MurB_C"/>
    <property type="match status" value="1"/>
</dbReference>
<dbReference type="SUPFAM" id="SSF56176">
    <property type="entry name" value="FAD-binding/transporter-associated domain-like"/>
    <property type="match status" value="1"/>
</dbReference>
<dbReference type="SUPFAM" id="SSF56194">
    <property type="entry name" value="Uridine diphospho-N-Acetylenolpyruvylglucosamine reductase, MurB, C-terminal domain"/>
    <property type="match status" value="1"/>
</dbReference>
<dbReference type="PROSITE" id="PS51387">
    <property type="entry name" value="FAD_PCMH"/>
    <property type="match status" value="1"/>
</dbReference>
<proteinExistence type="inferred from homology"/>
<keyword id="KW-0131">Cell cycle</keyword>
<keyword id="KW-0132">Cell division</keyword>
<keyword id="KW-0133">Cell shape</keyword>
<keyword id="KW-0961">Cell wall biogenesis/degradation</keyword>
<keyword id="KW-0963">Cytoplasm</keyword>
<keyword id="KW-0274">FAD</keyword>
<keyword id="KW-0285">Flavoprotein</keyword>
<keyword id="KW-0521">NADP</keyword>
<keyword id="KW-0560">Oxidoreductase</keyword>
<keyword id="KW-0573">Peptidoglycan synthesis</keyword>
<keyword id="KW-1185">Reference proteome</keyword>
<accession>A5G8J8</accession>
<sequence>MTDDTRTRLVAALRGELRFNEPMARHTALKVGGPADFFAIPADPSDLQSLMAVILEMGMPYLVVGGGYNLLVRDGGFRGVVISLKQFCSMEKLPDNRLRAEAGSTNQQLVRFANGQGLTGLEFLSGIPGMVGGALSVNAGAHGRSVLELVESLTTLQGGKITVTFREDLRYGYRHLELKPGEIVLAAVFSLAAGDAEEIEGRIQGYLEHRRNSQRVGYPNAGSFFKNPEGKQAWRLIDEAGLRGCQIGGAQVSEVHTNFLVNRGGAMAADFLQLAQVIKSKVRERSGIDLEEEVRIVGVD</sequence>